<gene>
    <name type="ordered locus">YPK_4186</name>
</gene>
<name>Y4186_YERPY</name>
<keyword id="KW-0997">Cell inner membrane</keyword>
<keyword id="KW-1003">Cell membrane</keyword>
<keyword id="KW-0472">Membrane</keyword>
<keyword id="KW-0812">Transmembrane</keyword>
<keyword id="KW-1133">Transmembrane helix</keyword>
<accession>B1JR04</accession>
<protein>
    <recommendedName>
        <fullName evidence="1">UPF0761 membrane protein YPK_4186</fullName>
    </recommendedName>
</protein>
<feature type="chain" id="PRO_1000131574" description="UPF0761 membrane protein YPK_4186">
    <location>
        <begin position="1"/>
        <end position="294"/>
    </location>
</feature>
<feature type="transmembrane region" description="Helical" evidence="1">
    <location>
        <begin position="44"/>
        <end position="64"/>
    </location>
</feature>
<feature type="transmembrane region" description="Helical" evidence="1">
    <location>
        <begin position="67"/>
        <end position="87"/>
    </location>
</feature>
<feature type="transmembrane region" description="Helical" evidence="1">
    <location>
        <begin position="108"/>
        <end position="128"/>
    </location>
</feature>
<feature type="transmembrane region" description="Helical" evidence="1">
    <location>
        <begin position="136"/>
        <end position="156"/>
    </location>
</feature>
<feature type="transmembrane region" description="Helical" evidence="1">
    <location>
        <begin position="185"/>
        <end position="205"/>
    </location>
</feature>
<feature type="transmembrane region" description="Helical" evidence="1">
    <location>
        <begin position="212"/>
        <end position="232"/>
    </location>
</feature>
<feature type="transmembrane region" description="Helical" evidence="1">
    <location>
        <begin position="246"/>
        <end position="266"/>
    </location>
</feature>
<sequence>MASFRRFRLLSPLKPCVTFGRMLYTRIDKDGLTMLAGHLAYVSLLSLVPLITVIFALFAAFPMFAEISIKLKAFIFANFMPATGDIIQNYLEQFVANSNRMTVVGTCGLIVTALLLIYSVDSVLNIIWRSKIQRSLVFSFAVYWMVLTLGPILVGASMVISSYLLSLHWLAHARVDSMIDEILRVFPLLISWVSFWLLYSVVPTVRVPARDALIGALVAALLFELGKKGFAMYITLFPSYQLIYGVLAVIPILFLWVYWSWCIVLLGAEITVTLGEYRAERHHAKNVITQSPEM</sequence>
<proteinExistence type="inferred from homology"/>
<comment type="subcellular location">
    <subcellularLocation>
        <location evidence="1">Cell inner membrane</location>
        <topology evidence="1">Multi-pass membrane protein</topology>
    </subcellularLocation>
</comment>
<comment type="similarity">
    <text evidence="1">Belongs to the UPF0761 family.</text>
</comment>
<organism>
    <name type="scientific">Yersinia pseudotuberculosis serotype O:3 (strain YPIII)</name>
    <dbReference type="NCBI Taxonomy" id="502800"/>
    <lineage>
        <taxon>Bacteria</taxon>
        <taxon>Pseudomonadati</taxon>
        <taxon>Pseudomonadota</taxon>
        <taxon>Gammaproteobacteria</taxon>
        <taxon>Enterobacterales</taxon>
        <taxon>Yersiniaceae</taxon>
        <taxon>Yersinia</taxon>
    </lineage>
</organism>
<evidence type="ECO:0000255" key="1">
    <source>
        <dbReference type="HAMAP-Rule" id="MF_00672"/>
    </source>
</evidence>
<reference key="1">
    <citation type="submission" date="2008-02" db="EMBL/GenBank/DDBJ databases">
        <title>Complete sequence of Yersinia pseudotuberculosis YPIII.</title>
        <authorList>
            <consortium name="US DOE Joint Genome Institute"/>
            <person name="Copeland A."/>
            <person name="Lucas S."/>
            <person name="Lapidus A."/>
            <person name="Glavina del Rio T."/>
            <person name="Dalin E."/>
            <person name="Tice H."/>
            <person name="Bruce D."/>
            <person name="Goodwin L."/>
            <person name="Pitluck S."/>
            <person name="Munk A.C."/>
            <person name="Brettin T."/>
            <person name="Detter J.C."/>
            <person name="Han C."/>
            <person name="Tapia R."/>
            <person name="Schmutz J."/>
            <person name="Larimer F."/>
            <person name="Land M."/>
            <person name="Hauser L."/>
            <person name="Challacombe J.F."/>
            <person name="Green L."/>
            <person name="Lindler L.E."/>
            <person name="Nikolich M.P."/>
            <person name="Richardson P."/>
        </authorList>
    </citation>
    <scope>NUCLEOTIDE SEQUENCE [LARGE SCALE GENOMIC DNA]</scope>
    <source>
        <strain>YPIII</strain>
    </source>
</reference>
<dbReference type="EMBL" id="CP000950">
    <property type="protein sequence ID" value="ACA70445.1"/>
    <property type="molecule type" value="Genomic_DNA"/>
</dbReference>
<dbReference type="RefSeq" id="WP_012304781.1">
    <property type="nucleotide sequence ID" value="NZ_CP009792.1"/>
</dbReference>
<dbReference type="KEGG" id="ypy:YPK_4186"/>
<dbReference type="PATRIC" id="fig|502800.11.peg.537"/>
<dbReference type="GO" id="GO:0005886">
    <property type="term" value="C:plasma membrane"/>
    <property type="evidence" value="ECO:0007669"/>
    <property type="project" value="UniProtKB-SubCell"/>
</dbReference>
<dbReference type="HAMAP" id="MF_00672">
    <property type="entry name" value="UPF0761"/>
    <property type="match status" value="1"/>
</dbReference>
<dbReference type="InterPro" id="IPR023679">
    <property type="entry name" value="UPF0761_bac"/>
</dbReference>
<dbReference type="InterPro" id="IPR017039">
    <property type="entry name" value="Virul_fac_BrkB"/>
</dbReference>
<dbReference type="NCBIfam" id="NF002457">
    <property type="entry name" value="PRK01637.1"/>
    <property type="match status" value="1"/>
</dbReference>
<dbReference type="NCBIfam" id="TIGR00765">
    <property type="entry name" value="yihY_not_rbn"/>
    <property type="match status" value="1"/>
</dbReference>
<dbReference type="PANTHER" id="PTHR30213">
    <property type="entry name" value="INNER MEMBRANE PROTEIN YHJD"/>
    <property type="match status" value="1"/>
</dbReference>
<dbReference type="PANTHER" id="PTHR30213:SF0">
    <property type="entry name" value="UPF0761 MEMBRANE PROTEIN YIHY"/>
    <property type="match status" value="1"/>
</dbReference>
<dbReference type="Pfam" id="PF03631">
    <property type="entry name" value="Virul_fac_BrkB"/>
    <property type="match status" value="1"/>
</dbReference>
<dbReference type="PIRSF" id="PIRSF035875">
    <property type="entry name" value="RNase_BN"/>
    <property type="match status" value="1"/>
</dbReference>